<accession>Q6PIJ6</accession>
<accession>Q6PK72</accession>
<accession>Q7Z2U0</accession>
<accession>Q86VN3</accession>
<accession>Q9BXY6</accession>
<accession>Q9H837</accession>
<accession>Q9HC40</accession>
<comment type="function">
    <text evidence="1 6">Substrate recognition component of a SCF (SKP1-CUL1-F-box protein) E3 ubiquitin-protein ligase complex which mediates the ubiquitination and subsequent proteasomal degradation of PDCD1/PD-1, thereby regulating T-cells-mediated immunity (PubMed:30487606). Required for anti-tumor activity of T-cells by promoting the degradation of PDCD1/PD-1; the PDCD1-mediated inhibitory pathway being exploited by tumors to attenuate anti-tumor immunity and facilitate tumor survival (PubMed:30487606). May indirectly stimulate the activity of transcription factor KLF7, a regulator of neuronal differentiation, without promoting KLF7 ubiquitination (By similarity).</text>
</comment>
<comment type="pathway">
    <text evidence="6">Protein modification; protein ubiquitination.</text>
</comment>
<comment type="subunit">
    <text evidence="1 6 11">Part of the SCF (SKP1-CUL1-F-box) E3 ubiquitin-protein ligase complex SCF(FBXO38) composed of CUL1, SKP1, RBX1 and FBXO38 (Probable). Interacts with KLF7 (By similarity). Interacts with PDCD1/PD-1 (PubMed:30487606).</text>
</comment>
<comment type="subcellular location">
    <subcellularLocation>
        <location evidence="1">Cytoplasm</location>
        <location evidence="1">Cytosol</location>
    </subcellularLocation>
    <subcellularLocation>
        <location evidence="1">Nucleus</location>
    </subcellularLocation>
    <text evidence="1">Accumulates predominantly in the cytosol. Exported from the nucleus in a XPO1/CRM1-dependent manner.</text>
</comment>
<comment type="alternative products">
    <event type="alternative splicing"/>
    <isoform>
        <id>Q6PIJ6-1</id>
        <name>1</name>
        <sequence type="displayed"/>
    </isoform>
    <isoform>
        <id>Q6PIJ6-2</id>
        <name>2</name>
        <name>a</name>
        <sequence type="described" ref="VSP_011449"/>
    </isoform>
    <isoform>
        <id>Q6PIJ6-3</id>
        <name>3</name>
        <sequence type="described" ref="VSP_011448 VSP_011449"/>
    </isoform>
</comment>
<comment type="induction">
    <text evidence="6">Up-regulated by IL2 (PubMed:30487606). Down-regulated in tumor-infiltrating T-cells (PubMed:30487606).</text>
</comment>
<comment type="disease" evidence="5">
    <disease id="DI-03987">
        <name>Neuronopathy, distal hereditary motor, autosomal dominant 6</name>
        <acronym>HMND6</acronym>
        <description>A form of distal hereditary motor neuronopathy, a heterogeneous group of neuromuscular disorders caused by selective degeneration of motor neurons in the anterior horn of the spinal cord, without sensory deficit in the posterior horn. The overall clinical picture consists of a classical distal muscular atrophy syndrome in the legs without clinical sensory loss. The disease starts with weakness and wasting of distal muscles of the anterior tibial and peroneal compartments of the legs. Later on, weakness and atrophy may expand to the proximal muscles of the lower limbs and/or to the distal upper limbs.</description>
        <dbReference type="MIM" id="615575"/>
    </disease>
    <text>The disease is caused by variants affecting the gene represented in this entry.</text>
</comment>
<comment type="sequence caution" evidence="10">
    <conflict type="frameshift">
        <sequence resource="EMBL-CDS" id="AAG17983"/>
    </conflict>
</comment>
<comment type="sequence caution" evidence="10">
    <conflict type="erroneous initiation">
        <sequence resource="EMBL-CDS" id="AAH56147"/>
    </conflict>
    <text>Truncated N-terminus.</text>
</comment>
<comment type="sequence caution" evidence="10">
    <conflict type="erroneous initiation">
        <sequence resource="EMBL-CDS" id="AAK34945"/>
    </conflict>
    <text>Truncated N-terminus.</text>
</comment>
<comment type="sequence caution" evidence="10">
    <conflict type="frameshift">
        <sequence resource="EMBL-CDS" id="BAB14783"/>
    </conflict>
</comment>
<organism>
    <name type="scientific">Homo sapiens</name>
    <name type="common">Human</name>
    <dbReference type="NCBI Taxonomy" id="9606"/>
    <lineage>
        <taxon>Eukaryota</taxon>
        <taxon>Metazoa</taxon>
        <taxon>Chordata</taxon>
        <taxon>Craniata</taxon>
        <taxon>Vertebrata</taxon>
        <taxon>Euteleostomi</taxon>
        <taxon>Mammalia</taxon>
        <taxon>Eutheria</taxon>
        <taxon>Euarchontoglires</taxon>
        <taxon>Primates</taxon>
        <taxon>Haplorrhini</taxon>
        <taxon>Catarrhini</taxon>
        <taxon>Hominidae</taxon>
        <taxon>Homo</taxon>
    </lineage>
</organism>
<name>FBX38_HUMAN</name>
<keyword id="KW-1064">Adaptive immunity</keyword>
<keyword id="KW-0025">Alternative splicing</keyword>
<keyword id="KW-0963">Cytoplasm</keyword>
<keyword id="KW-0225">Disease variant</keyword>
<keyword id="KW-0391">Immunity</keyword>
<keyword id="KW-0523">Neurodegeneration</keyword>
<keyword id="KW-0622">Neuropathy</keyword>
<keyword id="KW-0539">Nucleus</keyword>
<keyword id="KW-0597">Phosphoprotein</keyword>
<keyword id="KW-1267">Proteomics identification</keyword>
<keyword id="KW-1185">Reference proteome</keyword>
<keyword id="KW-0833">Ubl conjugation pathway</keyword>
<proteinExistence type="evidence at protein level"/>
<reference key="1">
    <citation type="journal article" date="2004" name="Genome Res.">
        <title>The status, quality, and expansion of the NIH full-length cDNA project: the Mammalian Gene Collection (MGC).</title>
        <authorList>
            <consortium name="The MGC Project Team"/>
        </authorList>
    </citation>
    <scope>NUCLEOTIDE SEQUENCE [LARGE SCALE MRNA] (ISOFORMS 2 AND 3)</scope>
    <scope>NUCLEOTIDE SEQUENCE [LARGE SCALE MRNA] OF 421-1188 (ISOFORM 1)</scope>
    <scope>VARIANT PRO-592</scope>
    <source>
        <tissue>Muscle</tissue>
        <tissue>PNS</tissue>
        <tissue>Testis</tissue>
        <tissue>Uterus</tissue>
    </source>
</reference>
<reference key="2">
    <citation type="submission" date="2000-03" db="EMBL/GenBank/DDBJ databases">
        <authorList>
            <person name="Mao Y."/>
            <person name="Xie Y."/>
            <person name="Zhou Z."/>
            <person name="Zhao W."/>
            <person name="Zhao S."/>
            <person name="Wang W."/>
            <person name="Huang Y."/>
            <person name="Wang S."/>
            <person name="Tang R."/>
            <person name="Chen X."/>
            <person name="Wu C."/>
        </authorList>
    </citation>
    <scope>NUCLEOTIDE SEQUENCE [MRNA] OF 299-1188 (ISOFORM 2)</scope>
    <scope>VARIANT PRO-592</scope>
</reference>
<reference key="3">
    <citation type="journal article" date="2004" name="Nat. Genet.">
        <title>Complete sequencing and characterization of 21,243 full-length human cDNAs.</title>
        <authorList>
            <person name="Ota T."/>
            <person name="Suzuki Y."/>
            <person name="Nishikawa T."/>
            <person name="Otsuki T."/>
            <person name="Sugiyama T."/>
            <person name="Irie R."/>
            <person name="Wakamatsu A."/>
            <person name="Hayashi K."/>
            <person name="Sato H."/>
            <person name="Nagai K."/>
            <person name="Kimura K."/>
            <person name="Makita H."/>
            <person name="Sekine M."/>
            <person name="Obayashi M."/>
            <person name="Nishi T."/>
            <person name="Shibahara T."/>
            <person name="Tanaka T."/>
            <person name="Ishii S."/>
            <person name="Yamamoto J."/>
            <person name="Saito K."/>
            <person name="Kawai Y."/>
            <person name="Isono Y."/>
            <person name="Nakamura Y."/>
            <person name="Nagahari K."/>
            <person name="Murakami K."/>
            <person name="Yasuda T."/>
            <person name="Iwayanagi T."/>
            <person name="Wagatsuma M."/>
            <person name="Shiratori A."/>
            <person name="Sudo H."/>
            <person name="Hosoiri T."/>
            <person name="Kaku Y."/>
            <person name="Kodaira H."/>
            <person name="Kondo H."/>
            <person name="Sugawara M."/>
            <person name="Takahashi M."/>
            <person name="Kanda K."/>
            <person name="Yokoi T."/>
            <person name="Furuya T."/>
            <person name="Kikkawa E."/>
            <person name="Omura Y."/>
            <person name="Abe K."/>
            <person name="Kamihara K."/>
            <person name="Katsuta N."/>
            <person name="Sato K."/>
            <person name="Tanikawa M."/>
            <person name="Yamazaki M."/>
            <person name="Ninomiya K."/>
            <person name="Ishibashi T."/>
            <person name="Yamashita H."/>
            <person name="Murakawa K."/>
            <person name="Fujimori K."/>
            <person name="Tanai H."/>
            <person name="Kimata M."/>
            <person name="Watanabe M."/>
            <person name="Hiraoka S."/>
            <person name="Chiba Y."/>
            <person name="Ishida S."/>
            <person name="Ono Y."/>
            <person name="Takiguchi S."/>
            <person name="Watanabe S."/>
            <person name="Yosida M."/>
            <person name="Hotuta T."/>
            <person name="Kusano J."/>
            <person name="Kanehori K."/>
            <person name="Takahashi-Fujii A."/>
            <person name="Hara H."/>
            <person name="Tanase T.-O."/>
            <person name="Nomura Y."/>
            <person name="Togiya S."/>
            <person name="Komai F."/>
            <person name="Hara R."/>
            <person name="Takeuchi K."/>
            <person name="Arita M."/>
            <person name="Imose N."/>
            <person name="Musashino K."/>
            <person name="Yuuki H."/>
            <person name="Oshima A."/>
            <person name="Sasaki N."/>
            <person name="Aotsuka S."/>
            <person name="Yoshikawa Y."/>
            <person name="Matsunawa H."/>
            <person name="Ichihara T."/>
            <person name="Shiohata N."/>
            <person name="Sano S."/>
            <person name="Moriya S."/>
            <person name="Momiyama H."/>
            <person name="Satoh N."/>
            <person name="Takami S."/>
            <person name="Terashima Y."/>
            <person name="Suzuki O."/>
            <person name="Nakagawa S."/>
            <person name="Senoh A."/>
            <person name="Mizoguchi H."/>
            <person name="Goto Y."/>
            <person name="Shimizu F."/>
            <person name="Wakebe H."/>
            <person name="Hishigaki H."/>
            <person name="Watanabe T."/>
            <person name="Sugiyama A."/>
            <person name="Takemoto M."/>
            <person name="Kawakami B."/>
            <person name="Yamazaki M."/>
            <person name="Watanabe K."/>
            <person name="Kumagai A."/>
            <person name="Itakura S."/>
            <person name="Fukuzumi Y."/>
            <person name="Fujimori Y."/>
            <person name="Komiyama M."/>
            <person name="Tashiro H."/>
            <person name="Tanigami A."/>
            <person name="Fujiwara T."/>
            <person name="Ono T."/>
            <person name="Yamada K."/>
            <person name="Fujii Y."/>
            <person name="Ozaki K."/>
            <person name="Hirao M."/>
            <person name="Ohmori Y."/>
            <person name="Kawabata A."/>
            <person name="Hikiji T."/>
            <person name="Kobatake N."/>
            <person name="Inagaki H."/>
            <person name="Ikema Y."/>
            <person name="Okamoto S."/>
            <person name="Okitani R."/>
            <person name="Kawakami T."/>
            <person name="Noguchi S."/>
            <person name="Itoh T."/>
            <person name="Shigeta K."/>
            <person name="Senba T."/>
            <person name="Matsumura K."/>
            <person name="Nakajima Y."/>
            <person name="Mizuno T."/>
            <person name="Morinaga M."/>
            <person name="Sasaki M."/>
            <person name="Togashi T."/>
            <person name="Oyama M."/>
            <person name="Hata H."/>
            <person name="Watanabe M."/>
            <person name="Komatsu T."/>
            <person name="Mizushima-Sugano J."/>
            <person name="Satoh T."/>
            <person name="Shirai Y."/>
            <person name="Takahashi Y."/>
            <person name="Nakagawa K."/>
            <person name="Okumura K."/>
            <person name="Nagase T."/>
            <person name="Nomura N."/>
            <person name="Kikuchi H."/>
            <person name="Masuho Y."/>
            <person name="Yamashita R."/>
            <person name="Nakai K."/>
            <person name="Yada T."/>
            <person name="Nakamura Y."/>
            <person name="Ohara O."/>
            <person name="Isogai T."/>
            <person name="Sugano S."/>
        </authorList>
    </citation>
    <scope>NUCLEOTIDE SEQUENCE [LARGE SCALE MRNA] OF 1-692 (ISOFORMS 1/2)</scope>
</reference>
<reference key="4">
    <citation type="journal article" date="2004" name="Proc. Natl. Acad. Sci. U.S.A.">
        <title>Large-scale cDNA transfection screening for genes related to cancer development and progression.</title>
        <authorList>
            <person name="Wan D."/>
            <person name="Gong Y."/>
            <person name="Qin W."/>
            <person name="Zhang P."/>
            <person name="Li J."/>
            <person name="Wei L."/>
            <person name="Zhou X."/>
            <person name="Li H."/>
            <person name="Qiu X."/>
            <person name="Zhong F."/>
            <person name="He L."/>
            <person name="Yu J."/>
            <person name="Yao G."/>
            <person name="Jiang H."/>
            <person name="Qian L."/>
            <person name="Yu Y."/>
            <person name="Shu H."/>
            <person name="Chen X."/>
            <person name="Xu H."/>
            <person name="Guo M."/>
            <person name="Pan Z."/>
            <person name="Chen Y."/>
            <person name="Ge C."/>
            <person name="Yang S."/>
            <person name="Gu J."/>
        </authorList>
    </citation>
    <scope>NUCLEOTIDE SEQUENCE [LARGE SCALE MRNA] OF 639-1188 (ISOFORM 1)</scope>
</reference>
<reference key="5">
    <citation type="journal article" date="2008" name="Proc. Natl. Acad. Sci. U.S.A.">
        <title>A quantitative atlas of mitotic phosphorylation.</title>
        <authorList>
            <person name="Dephoure N."/>
            <person name="Zhou C."/>
            <person name="Villen J."/>
            <person name="Beausoleil S.A."/>
            <person name="Bakalarski C.E."/>
            <person name="Elledge S.J."/>
            <person name="Gygi S.P."/>
        </authorList>
    </citation>
    <scope>IDENTIFICATION BY MASS SPECTROMETRY [LARGE SCALE ANALYSIS]</scope>
    <source>
        <tissue>Cervix carcinoma</tissue>
    </source>
</reference>
<reference key="6">
    <citation type="journal article" date="2009" name="Sci. Signal.">
        <title>Quantitative phosphoproteomic analysis of T cell receptor signaling reveals system-wide modulation of protein-protein interactions.</title>
        <authorList>
            <person name="Mayya V."/>
            <person name="Lundgren D.H."/>
            <person name="Hwang S.-I."/>
            <person name="Rezaul K."/>
            <person name="Wu L."/>
            <person name="Eng J.K."/>
            <person name="Rodionov V."/>
            <person name="Han D.K."/>
        </authorList>
    </citation>
    <scope>PHOSPHORYLATION [LARGE SCALE ANALYSIS] AT SER-736</scope>
    <scope>IDENTIFICATION BY MASS SPECTROMETRY [LARGE SCALE ANALYSIS]</scope>
    <source>
        <tissue>Leukemic T-cell</tissue>
    </source>
</reference>
<reference key="7">
    <citation type="journal article" date="2013" name="J. Proteome Res.">
        <title>Toward a comprehensive characterization of a human cancer cell phosphoproteome.</title>
        <authorList>
            <person name="Zhou H."/>
            <person name="Di Palma S."/>
            <person name="Preisinger C."/>
            <person name="Peng M."/>
            <person name="Polat A.N."/>
            <person name="Heck A.J."/>
            <person name="Mohammed S."/>
        </authorList>
    </citation>
    <scope>PHOSPHORYLATION [LARGE SCALE ANALYSIS] AT SER-740</scope>
    <scope>IDENTIFICATION BY MASS SPECTROMETRY [LARGE SCALE ANALYSIS]</scope>
    <source>
        <tissue>Erythroleukemia</tissue>
    </source>
</reference>
<reference key="8">
    <citation type="journal article" date="2014" name="J. Proteomics">
        <title>An enzyme assisted RP-RPLC approach for in-depth analysis of human liver phosphoproteome.</title>
        <authorList>
            <person name="Bian Y."/>
            <person name="Song C."/>
            <person name="Cheng K."/>
            <person name="Dong M."/>
            <person name="Wang F."/>
            <person name="Huang J."/>
            <person name="Sun D."/>
            <person name="Wang L."/>
            <person name="Ye M."/>
            <person name="Zou H."/>
        </authorList>
    </citation>
    <scope>IDENTIFICATION BY MASS SPECTROMETRY [LARGE SCALE ANALYSIS]</scope>
    <source>
        <tissue>Liver</tissue>
    </source>
</reference>
<reference key="9">
    <citation type="journal article" date="2018" name="Nature">
        <title>FBXO38 mediates PD-1 ubiquitination and regulates anti-tumour immunity of T cells.</title>
        <authorList>
            <person name="Meng X."/>
            <person name="Liu X."/>
            <person name="Guo X."/>
            <person name="Jiang S."/>
            <person name="Chen T."/>
            <person name="Hu Z."/>
            <person name="Liu H."/>
            <person name="Bai Y."/>
            <person name="Xue M."/>
            <person name="Hu R."/>
            <person name="Sun S.C."/>
            <person name="Liu X."/>
            <person name="Zhou P."/>
            <person name="Huang X."/>
            <person name="Wei L."/>
            <person name="Yang W."/>
            <person name="Xu C."/>
        </authorList>
    </citation>
    <scope>FUNCTION</scope>
    <scope>PATHWAY</scope>
    <scope>INTERACTION WITH PDCD1</scope>
    <scope>INDUCTION</scope>
</reference>
<reference key="10">
    <citation type="journal article" date="2013" name="Am. J. Hum. Genet.">
        <title>A dominant mutation in FBXO38 causes distal spinal muscular atrophy with calf predominance.</title>
        <authorList>
            <person name="Sumner C.J."/>
            <person name="d'Ydewalle C."/>
            <person name="Wooley J."/>
            <person name="Fawcett K.A."/>
            <person name="Hernandez D."/>
            <person name="Gardiner A.R."/>
            <person name="Kalmar B."/>
            <person name="Baloh R.H."/>
            <person name="Gonzalez M."/>
            <person name="Zuchner S."/>
            <person name="Stanescu H.C."/>
            <person name="Kleta R."/>
            <person name="Mankodi A."/>
            <person name="Cornblath D.R."/>
            <person name="Boylan K.B."/>
            <person name="Reilly M.M."/>
            <person name="Greensmith L."/>
            <person name="Singleton A.B."/>
            <person name="Harms M.B."/>
            <person name="Rossor A.M."/>
            <person name="Houlden H."/>
        </authorList>
    </citation>
    <scope>VARIANT HMND6 ARG-206</scope>
    <scope>CHARACTERIZATION OF VARIANT HMND6 ARG-206</scope>
</reference>
<feature type="chain" id="PRO_0000119933" description="F-box only protein 38">
    <location>
        <begin position="1"/>
        <end position="1188"/>
    </location>
</feature>
<feature type="domain" description="F-box" evidence="2">
    <location>
        <begin position="30"/>
        <end position="75"/>
    </location>
</feature>
<feature type="region of interest" description="Interaction with KLF7" evidence="1">
    <location>
        <begin position="59"/>
        <end position="119"/>
    </location>
</feature>
<feature type="region of interest" description="Disordered" evidence="3">
    <location>
        <begin position="487"/>
        <end position="526"/>
    </location>
</feature>
<feature type="region of interest" description="Disordered" evidence="3">
    <location>
        <begin position="620"/>
        <end position="666"/>
    </location>
</feature>
<feature type="region of interest" description="Disordered" evidence="3">
    <location>
        <begin position="685"/>
        <end position="766"/>
    </location>
</feature>
<feature type="region of interest" description="Disordered" evidence="3">
    <location>
        <begin position="787"/>
        <end position="909"/>
    </location>
</feature>
<feature type="short sequence motif" description="Nuclear export signal 1" evidence="1">
    <location>
        <begin position="194"/>
        <end position="201"/>
    </location>
</feature>
<feature type="short sequence motif" description="Nuclear export signal 2" evidence="1">
    <location>
        <begin position="307"/>
        <end position="316"/>
    </location>
</feature>
<feature type="short sequence motif" description="Nuclear export signal 3" evidence="1">
    <location>
        <begin position="451"/>
        <end position="460"/>
    </location>
</feature>
<feature type="short sequence motif" description="Nuclear localization signal" evidence="1">
    <location>
        <begin position="896"/>
        <end position="899"/>
    </location>
</feature>
<feature type="compositionally biased region" description="Low complexity" evidence="3">
    <location>
        <begin position="491"/>
        <end position="509"/>
    </location>
</feature>
<feature type="compositionally biased region" description="Basic and acidic residues" evidence="3">
    <location>
        <begin position="621"/>
        <end position="630"/>
    </location>
</feature>
<feature type="compositionally biased region" description="Basic and acidic residues" evidence="3">
    <location>
        <begin position="685"/>
        <end position="699"/>
    </location>
</feature>
<feature type="compositionally biased region" description="Polar residues" evidence="3">
    <location>
        <begin position="703"/>
        <end position="740"/>
    </location>
</feature>
<feature type="compositionally biased region" description="Basic and acidic residues" evidence="3">
    <location>
        <begin position="787"/>
        <end position="798"/>
    </location>
</feature>
<feature type="compositionally biased region" description="Polar residues" evidence="3">
    <location>
        <begin position="849"/>
        <end position="861"/>
    </location>
</feature>
<feature type="compositionally biased region" description="Basic residues" evidence="3">
    <location>
        <begin position="889"/>
        <end position="900"/>
    </location>
</feature>
<feature type="modified residue" description="Phosphothreonine" evidence="1">
    <location>
        <position position="591"/>
    </location>
</feature>
<feature type="modified residue" description="Phosphoserine" evidence="1">
    <location>
        <position position="598"/>
    </location>
</feature>
<feature type="modified residue" description="Phosphoserine" evidence="1">
    <location>
        <position position="600"/>
    </location>
</feature>
<feature type="modified residue" description="Phosphoserine" evidence="1">
    <location>
        <position position="606"/>
    </location>
</feature>
<feature type="modified residue" description="Phosphoserine" evidence="13">
    <location>
        <position position="736"/>
    </location>
</feature>
<feature type="modified residue" description="Phosphoserine" evidence="14">
    <location>
        <position position="740"/>
    </location>
</feature>
<feature type="splice variant" id="VSP_011448" description="In isoform 3." evidence="8">
    <location>
        <begin position="640"/>
        <end position="809"/>
    </location>
</feature>
<feature type="splice variant" id="VSP_011449" description="In isoform 2 and isoform 3." evidence="8 9">
    <location>
        <begin position="810"/>
        <end position="884"/>
    </location>
</feature>
<feature type="sequence variant" id="VAR_070923" description="In HMND6; unable to promote activation of KLF7 target genes including CDKN1A and L1CAM in both cultured cells and patient-derived cells; dbSNP:rs398122838." evidence="5">
    <original>C</original>
    <variation>R</variation>
    <location>
        <position position="206"/>
    </location>
</feature>
<feature type="sequence variant" id="VAR_028099" description="In dbSNP:rs10043775." evidence="4 7">
    <original>S</original>
    <variation>P</variation>
    <location>
        <position position="592"/>
    </location>
</feature>
<feature type="sequence variant" id="VAR_049049" description="In dbSNP:rs11949133.">
    <original>A</original>
    <variation>T</variation>
    <location>
        <position position="894"/>
    </location>
</feature>
<feature type="sequence conflict" description="In Ref. 1; AAH33454." evidence="10" ref="1">
    <original>A</original>
    <variation>S</variation>
    <location>
        <position position="137"/>
    </location>
</feature>
<feature type="sequence conflict" description="In Ref. 3; BAB14783." evidence="10" ref="3">
    <original>L</original>
    <variation>S</variation>
    <location>
        <position position="264"/>
    </location>
</feature>
<feature type="sequence conflict" description="In Ref. 3; BAB14783." evidence="10" ref="3">
    <original>I</original>
    <variation>N</variation>
    <location>
        <position position="315"/>
    </location>
</feature>
<feature type="sequence conflict" description="In Ref. 1; AAH33454." evidence="10" ref="1">
    <original>T</original>
    <variation>A</variation>
    <location>
        <position position="480"/>
    </location>
</feature>
<feature type="sequence conflict" description="In Ref. 1; AAH33454." evidence="10" ref="1">
    <original>D</original>
    <variation>E</variation>
    <location>
        <position position="498"/>
    </location>
</feature>
<feature type="sequence conflict" description="In Ref. 4; AAG17983." evidence="10" ref="4">
    <original>RC</original>
    <variation>DA</variation>
    <location>
        <begin position="775"/>
        <end position="776"/>
    </location>
</feature>
<dbReference type="EMBL" id="BC005849">
    <property type="protein sequence ID" value="AAH05849.1"/>
    <property type="molecule type" value="mRNA"/>
</dbReference>
<dbReference type="EMBL" id="BC005873">
    <property type="protein sequence ID" value="AAH05873.1"/>
    <property type="molecule type" value="mRNA"/>
</dbReference>
<dbReference type="EMBL" id="BC033454">
    <property type="protein sequence ID" value="AAH33454.1"/>
    <property type="molecule type" value="mRNA"/>
</dbReference>
<dbReference type="EMBL" id="BC050424">
    <property type="protein sequence ID" value="AAH50424.1"/>
    <property type="molecule type" value="mRNA"/>
</dbReference>
<dbReference type="EMBL" id="BC056147">
    <property type="protein sequence ID" value="AAH56147.1"/>
    <property type="status" value="ALT_INIT"/>
    <property type="molecule type" value="mRNA"/>
</dbReference>
<dbReference type="EMBL" id="AF251055">
    <property type="protein sequence ID" value="AAK34945.1"/>
    <property type="status" value="ALT_INIT"/>
    <property type="molecule type" value="mRNA"/>
</dbReference>
<dbReference type="EMBL" id="AK024024">
    <property type="protein sequence ID" value="BAB14783.1"/>
    <property type="status" value="ALT_FRAME"/>
    <property type="molecule type" value="mRNA"/>
</dbReference>
<dbReference type="EMBL" id="AF177339">
    <property type="protein sequence ID" value="AAG17983.1"/>
    <property type="status" value="ALT_FRAME"/>
    <property type="molecule type" value="mRNA"/>
</dbReference>
<dbReference type="CCDS" id="CCDS4290.1">
    <molecule id="Q6PIJ6-1"/>
</dbReference>
<dbReference type="CCDS" id="CCDS43384.1">
    <molecule id="Q6PIJ6-2"/>
</dbReference>
<dbReference type="CCDS" id="CCDS64285.1">
    <molecule id="Q6PIJ6-3"/>
</dbReference>
<dbReference type="RefSeq" id="NP_001258652.1">
    <molecule id="Q6PIJ6-3"/>
    <property type="nucleotide sequence ID" value="NM_001271723.2"/>
</dbReference>
<dbReference type="RefSeq" id="NP_110420.3">
    <molecule id="Q6PIJ6-2"/>
    <property type="nucleotide sequence ID" value="NM_030793.4"/>
</dbReference>
<dbReference type="RefSeq" id="NP_995308.1">
    <molecule id="Q6PIJ6-1"/>
    <property type="nucleotide sequence ID" value="NM_205836.3"/>
</dbReference>
<dbReference type="RefSeq" id="XP_005268570.1">
    <property type="nucleotide sequence ID" value="XM_005268513.1"/>
</dbReference>
<dbReference type="RefSeq" id="XP_024301991.1">
    <molecule id="Q6PIJ6-1"/>
    <property type="nucleotide sequence ID" value="XM_024446223.2"/>
</dbReference>
<dbReference type="RefSeq" id="XP_047273740.1">
    <molecule id="Q6PIJ6-2"/>
    <property type="nucleotide sequence ID" value="XM_047417784.1"/>
</dbReference>
<dbReference type="RefSeq" id="XP_047273742.1">
    <molecule id="Q6PIJ6-3"/>
    <property type="nucleotide sequence ID" value="XM_047417786.1"/>
</dbReference>
<dbReference type="RefSeq" id="XP_054209546.1">
    <molecule id="Q6PIJ6-1"/>
    <property type="nucleotide sequence ID" value="XM_054353571.1"/>
</dbReference>
<dbReference type="RefSeq" id="XP_054209548.1">
    <molecule id="Q6PIJ6-2"/>
    <property type="nucleotide sequence ID" value="XM_054353573.1"/>
</dbReference>
<dbReference type="RefSeq" id="XP_054209550.1">
    <molecule id="Q6PIJ6-3"/>
    <property type="nucleotide sequence ID" value="XM_054353575.1"/>
</dbReference>
<dbReference type="BioGRID" id="123513">
    <property type="interactions" value="148"/>
</dbReference>
<dbReference type="ComplexPortal" id="CPX-7977">
    <property type="entry name" value="SCF E3 ubiquitin ligase complex, FBXO38 variant"/>
</dbReference>
<dbReference type="FunCoup" id="Q6PIJ6">
    <property type="interactions" value="3476"/>
</dbReference>
<dbReference type="IntAct" id="Q6PIJ6">
    <property type="interactions" value="29"/>
</dbReference>
<dbReference type="MINT" id="Q6PIJ6"/>
<dbReference type="STRING" id="9606.ENSP00000342023"/>
<dbReference type="GlyGen" id="Q6PIJ6">
    <property type="glycosylation" value="2 sites, 1 O-linked glycan (2 sites)"/>
</dbReference>
<dbReference type="iPTMnet" id="Q6PIJ6"/>
<dbReference type="PhosphoSitePlus" id="Q6PIJ6"/>
<dbReference type="SwissPalm" id="Q6PIJ6"/>
<dbReference type="BioMuta" id="FBXO38"/>
<dbReference type="DMDM" id="116241362"/>
<dbReference type="jPOST" id="Q6PIJ6"/>
<dbReference type="MassIVE" id="Q6PIJ6"/>
<dbReference type="PaxDb" id="9606-ENSP00000377895"/>
<dbReference type="PeptideAtlas" id="Q6PIJ6"/>
<dbReference type="ProteomicsDB" id="67162">
    <molecule id="Q6PIJ6-1"/>
</dbReference>
<dbReference type="ProteomicsDB" id="67163">
    <molecule id="Q6PIJ6-2"/>
</dbReference>
<dbReference type="ProteomicsDB" id="67164">
    <molecule id="Q6PIJ6-3"/>
</dbReference>
<dbReference type="Pumba" id="Q6PIJ6"/>
<dbReference type="Antibodypedia" id="27733">
    <property type="antibodies" value="71 antibodies from 14 providers"/>
</dbReference>
<dbReference type="DNASU" id="81545"/>
<dbReference type="Ensembl" id="ENST00000296701.10">
    <molecule id="Q6PIJ6-3"/>
    <property type="protein sequence ID" value="ENSP00000296701.6"/>
    <property type="gene ID" value="ENSG00000145868.17"/>
</dbReference>
<dbReference type="Ensembl" id="ENST00000340253.10">
    <molecule id="Q6PIJ6-1"/>
    <property type="protein sequence ID" value="ENSP00000342023.6"/>
    <property type="gene ID" value="ENSG00000145868.17"/>
</dbReference>
<dbReference type="Ensembl" id="ENST00000394370.7">
    <molecule id="Q6PIJ6-2"/>
    <property type="protein sequence ID" value="ENSP00000377895.3"/>
    <property type="gene ID" value="ENSG00000145868.17"/>
</dbReference>
<dbReference type="Ensembl" id="ENST00000513826.1">
    <molecule id="Q6PIJ6-3"/>
    <property type="protein sequence ID" value="ENSP00000426410.1"/>
    <property type="gene ID" value="ENSG00000145868.17"/>
</dbReference>
<dbReference type="GeneID" id="81545"/>
<dbReference type="KEGG" id="hsa:81545"/>
<dbReference type="MANE-Select" id="ENST00000340253.10">
    <property type="protein sequence ID" value="ENSP00000342023.6"/>
    <property type="RefSeq nucleotide sequence ID" value="NM_205836.3"/>
    <property type="RefSeq protein sequence ID" value="NP_995308.1"/>
</dbReference>
<dbReference type="UCSC" id="uc003lpg.3">
    <molecule id="Q6PIJ6-1"/>
    <property type="organism name" value="human"/>
</dbReference>
<dbReference type="AGR" id="HGNC:28844"/>
<dbReference type="CTD" id="81545"/>
<dbReference type="DisGeNET" id="81545"/>
<dbReference type="GeneCards" id="FBXO38"/>
<dbReference type="HGNC" id="HGNC:28844">
    <property type="gene designation" value="FBXO38"/>
</dbReference>
<dbReference type="HPA" id="ENSG00000145868">
    <property type="expression patterns" value="Low tissue specificity"/>
</dbReference>
<dbReference type="MalaCards" id="FBXO38"/>
<dbReference type="MIM" id="608533">
    <property type="type" value="gene"/>
</dbReference>
<dbReference type="MIM" id="615575">
    <property type="type" value="phenotype"/>
</dbReference>
<dbReference type="neXtProt" id="NX_Q6PIJ6"/>
<dbReference type="OpenTargets" id="ENSG00000145868"/>
<dbReference type="Orphanet" id="139525">
    <property type="disease" value="Distal hereditary motor neuropathy type 2"/>
</dbReference>
<dbReference type="PharmGKB" id="PA134929999"/>
<dbReference type="VEuPathDB" id="HostDB:ENSG00000145868"/>
<dbReference type="eggNOG" id="ENOG502QSUC">
    <property type="taxonomic scope" value="Eukaryota"/>
</dbReference>
<dbReference type="GeneTree" id="ENSGT00390000013163"/>
<dbReference type="HOGENOM" id="CLU_010774_0_0_1"/>
<dbReference type="InParanoid" id="Q6PIJ6"/>
<dbReference type="OMA" id="ACITNNI"/>
<dbReference type="OrthoDB" id="10036898at2759"/>
<dbReference type="PAN-GO" id="Q6PIJ6">
    <property type="GO annotations" value="4 GO annotations based on evolutionary models"/>
</dbReference>
<dbReference type="PhylomeDB" id="Q6PIJ6"/>
<dbReference type="TreeFam" id="TF331125"/>
<dbReference type="PathwayCommons" id="Q6PIJ6"/>
<dbReference type="SignaLink" id="Q6PIJ6"/>
<dbReference type="SIGNOR" id="Q6PIJ6"/>
<dbReference type="UniPathway" id="UPA00143"/>
<dbReference type="BioGRID-ORCS" id="81545">
    <property type="hits" value="10 hits in 1199 CRISPR screens"/>
</dbReference>
<dbReference type="ChiTaRS" id="FBXO38">
    <property type="organism name" value="human"/>
</dbReference>
<dbReference type="GenomeRNAi" id="81545"/>
<dbReference type="Pharos" id="Q6PIJ6">
    <property type="development level" value="Tbio"/>
</dbReference>
<dbReference type="PRO" id="PR:Q6PIJ6"/>
<dbReference type="Proteomes" id="UP000005640">
    <property type="component" value="Chromosome 5"/>
</dbReference>
<dbReference type="RNAct" id="Q6PIJ6">
    <property type="molecule type" value="protein"/>
</dbReference>
<dbReference type="Bgee" id="ENSG00000145868">
    <property type="expression patterns" value="Expressed in calcaneal tendon and 194 other cell types or tissues"/>
</dbReference>
<dbReference type="GO" id="GO:0005737">
    <property type="term" value="C:cytoplasm"/>
    <property type="evidence" value="ECO:0000314"/>
    <property type="project" value="MGI"/>
</dbReference>
<dbReference type="GO" id="GO:0005829">
    <property type="term" value="C:cytosol"/>
    <property type="evidence" value="ECO:0007669"/>
    <property type="project" value="UniProtKB-SubCell"/>
</dbReference>
<dbReference type="GO" id="GO:0005634">
    <property type="term" value="C:nucleus"/>
    <property type="evidence" value="ECO:0000314"/>
    <property type="project" value="MGI"/>
</dbReference>
<dbReference type="GO" id="GO:0019005">
    <property type="term" value="C:SCF ubiquitin ligase complex"/>
    <property type="evidence" value="ECO:0000304"/>
    <property type="project" value="UniProtKB"/>
</dbReference>
<dbReference type="GO" id="GO:1990756">
    <property type="term" value="F:ubiquitin-like ligase-substrate adaptor activity"/>
    <property type="evidence" value="ECO:0000314"/>
    <property type="project" value="UniProtKB"/>
</dbReference>
<dbReference type="GO" id="GO:0002250">
    <property type="term" value="P:adaptive immune response"/>
    <property type="evidence" value="ECO:0007669"/>
    <property type="project" value="UniProtKB-KW"/>
</dbReference>
<dbReference type="GO" id="GO:0010976">
    <property type="term" value="P:positive regulation of neuron projection development"/>
    <property type="evidence" value="ECO:0000314"/>
    <property type="project" value="MGI"/>
</dbReference>
<dbReference type="GO" id="GO:0050870">
    <property type="term" value="P:positive regulation of T cell activation"/>
    <property type="evidence" value="ECO:0000314"/>
    <property type="project" value="UniProtKB"/>
</dbReference>
<dbReference type="GO" id="GO:0002842">
    <property type="term" value="P:positive regulation of T cell mediated immune response to tumor cell"/>
    <property type="evidence" value="ECO:0000314"/>
    <property type="project" value="UniProtKB"/>
</dbReference>
<dbReference type="GO" id="GO:0070936">
    <property type="term" value="P:protein K48-linked ubiquitination"/>
    <property type="evidence" value="ECO:0000314"/>
    <property type="project" value="UniProtKB"/>
</dbReference>
<dbReference type="GO" id="GO:0031146">
    <property type="term" value="P:SCF-dependent proteasomal ubiquitin-dependent protein catabolic process"/>
    <property type="evidence" value="ECO:0000314"/>
    <property type="project" value="UniProtKB"/>
</dbReference>
<dbReference type="CDD" id="cd22107">
    <property type="entry name" value="F-box_FBXO38"/>
    <property type="match status" value="1"/>
</dbReference>
<dbReference type="Gene3D" id="1.20.1280.50">
    <property type="match status" value="1"/>
</dbReference>
<dbReference type="Gene3D" id="3.80.10.10">
    <property type="entry name" value="Ribonuclease Inhibitor"/>
    <property type="match status" value="1"/>
</dbReference>
<dbReference type="InterPro" id="IPR036047">
    <property type="entry name" value="F-box-like_dom_sf"/>
</dbReference>
<dbReference type="InterPro" id="IPR001810">
    <property type="entry name" value="F-box_dom"/>
</dbReference>
<dbReference type="InterPro" id="IPR042354">
    <property type="entry name" value="FBX38"/>
</dbReference>
<dbReference type="InterPro" id="IPR032675">
    <property type="entry name" value="LRR_dom_sf"/>
</dbReference>
<dbReference type="PANTHER" id="PTHR14753">
    <property type="entry name" value="F-BOX ONLY PROTEIN 38"/>
    <property type="match status" value="1"/>
</dbReference>
<dbReference type="PANTHER" id="PTHR14753:SF3">
    <property type="entry name" value="F-BOX ONLY PROTEIN 38"/>
    <property type="match status" value="1"/>
</dbReference>
<dbReference type="Pfam" id="PF00646">
    <property type="entry name" value="F-box"/>
    <property type="match status" value="1"/>
</dbReference>
<dbReference type="SUPFAM" id="SSF81383">
    <property type="entry name" value="F-box domain"/>
    <property type="match status" value="1"/>
</dbReference>
<dbReference type="SUPFAM" id="SSF52047">
    <property type="entry name" value="RNI-like"/>
    <property type="match status" value="1"/>
</dbReference>
<evidence type="ECO:0000250" key="1">
    <source>
        <dbReference type="UniProtKB" id="Q8BMI0"/>
    </source>
</evidence>
<evidence type="ECO:0000255" key="2">
    <source>
        <dbReference type="PROSITE-ProRule" id="PRU00080"/>
    </source>
</evidence>
<evidence type="ECO:0000256" key="3">
    <source>
        <dbReference type="SAM" id="MobiDB-lite"/>
    </source>
</evidence>
<evidence type="ECO:0000269" key="4">
    <source>
    </source>
</evidence>
<evidence type="ECO:0000269" key="5">
    <source>
    </source>
</evidence>
<evidence type="ECO:0000269" key="6">
    <source>
    </source>
</evidence>
<evidence type="ECO:0000269" key="7">
    <source ref="2"/>
</evidence>
<evidence type="ECO:0000303" key="8">
    <source>
    </source>
</evidence>
<evidence type="ECO:0000303" key="9">
    <source ref="2"/>
</evidence>
<evidence type="ECO:0000305" key="10"/>
<evidence type="ECO:0000305" key="11">
    <source>
    </source>
</evidence>
<evidence type="ECO:0000312" key="12">
    <source>
        <dbReference type="HGNC" id="HGNC:28844"/>
    </source>
</evidence>
<evidence type="ECO:0007744" key="13">
    <source>
    </source>
</evidence>
<evidence type="ECO:0007744" key="14">
    <source>
    </source>
</evidence>
<sequence length="1188" mass="133944">MGPRKKSVKTCIMNNEIPEEMTADETKDYMNQLSHEVLCHIFRYLPLQDIMCMECLSRKLKEAVTLYLRVVRVVDLCAGRWWEYMPSGFTDASFLTLLKKMPDVEQLYGLHPRYLERRRVRGHEAFSIPGVLEALQACPNLVGVETSHLELVESIWTYMPHVHILGKFRNRNGAFPIPPENKLKIPIGAKIQTLHLVGVNVPEIPCIPMLRHLYMKWVRLTKPQPFKDFLCISLRTFVMRNCAGPTNSLKYVPLVTGLASARNLEHLEMVRVPFLGGLIQHVVEDSWRSGGFRNLHTIVLGACKNALEVDLGYLIITAARRLHEVRIQPSLTKDGVFSALKMAELEFPQFETLHLGYVDEFLLQSRMANADLVKYGLADVVENPGIITDIGMKAVNEVFSCIKYLAIYNCPHLHNPYNWISDHSRWTRLVDINLVRCHALKLDSFGQFIELLPSLEFISLDQMFREPPKGCARVGLSAGTGIGVSSALVSNQNSNNDDNNAQNNNANIHDNNHHHPDDSDEENDFRQDLQPGEQQFAADALNEMEDIVQEDGEVVAESGNNTPAHSQAIIPVDVDEEQAGPSGLQRVVKPTSITVHDSESDDEEDSLELQEVWIPKNGTRRYSEREEKTGESVQSRELSVSGKGKTPLRKRYNSHQMGQSKQFPLEESSCEKGCQVTSEQIKADMKAARDIPEKKKNKDVYPSCSSTTASTVGNSSSHNTASQSPDFVRTVNSGGSSEPSPTEVDVSRQCACSPGGSEDSEAMEEGDAESSVCPRCCCHRPQESQRRTSRCSDEERPSTSRACVVNGPDGTRSAFSFRTLPQGGSSGPAHDERTNGSGSGATGEDRRGSSQPESCDVQSNEDYPRRPLTRARSRLSHVLLVSESEVAKTKPRHAMKRKRTADKSTSTSDPVIEDDHVQVLVLKSKNLVGVTMTNCGITDLVLKDCPKMMFIHATRCRVLKHLKVENAPIVNRFDYAQCKKLNMDQVLDQILRMPPERNRIIYLRPMQQVDTLTLEQKLFSGPYPYHICIIHEFSNPPNVRNKVRIRSWMDTIANINQELIKYEFFPEATRSEEDLKKYPKYPWGREIYTLEGVVDGAPYSMISDFPWLRSLRAAEPNSFARYDFEDDEESTIYAPRRKGQLSADICMETIGEEISEMRQMKKGVFQRVVAIFIHYCDVNGEPVEDDYI</sequence>
<protein>
    <recommendedName>
        <fullName evidence="10">F-box only protein 38</fullName>
    </recommendedName>
</protein>
<gene>
    <name evidence="12" type="primary">FBXO38</name>
    <name type="ORF">SP329</name>
</gene>